<evidence type="ECO:0000250" key="1"/>
<evidence type="ECO:0000255" key="2">
    <source>
        <dbReference type="HAMAP-Rule" id="MF_00100"/>
    </source>
</evidence>
<evidence type="ECO:0000256" key="3">
    <source>
        <dbReference type="SAM" id="MobiDB-lite"/>
    </source>
</evidence>
<feature type="chain" id="PRO_0000228163" description="Translation initiation factor IF-2">
    <location>
        <begin position="1"/>
        <end position="686"/>
    </location>
</feature>
<feature type="domain" description="tr-type G">
    <location>
        <begin position="188"/>
        <end position="357"/>
    </location>
</feature>
<feature type="region of interest" description="Disordered" evidence="3">
    <location>
        <begin position="53"/>
        <end position="105"/>
    </location>
</feature>
<feature type="region of interest" description="G1" evidence="1">
    <location>
        <begin position="197"/>
        <end position="204"/>
    </location>
</feature>
<feature type="region of interest" description="G2" evidence="1">
    <location>
        <begin position="222"/>
        <end position="226"/>
    </location>
</feature>
<feature type="region of interest" description="G3" evidence="1">
    <location>
        <begin position="243"/>
        <end position="246"/>
    </location>
</feature>
<feature type="region of interest" description="G4" evidence="1">
    <location>
        <begin position="297"/>
        <end position="300"/>
    </location>
</feature>
<feature type="region of interest" description="G5" evidence="1">
    <location>
        <begin position="333"/>
        <end position="335"/>
    </location>
</feature>
<feature type="compositionally biased region" description="Basic residues" evidence="3">
    <location>
        <begin position="69"/>
        <end position="81"/>
    </location>
</feature>
<feature type="binding site" evidence="2">
    <location>
        <begin position="197"/>
        <end position="204"/>
    </location>
    <ligand>
        <name>GTP</name>
        <dbReference type="ChEBI" id="CHEBI:37565"/>
    </ligand>
</feature>
<feature type="binding site" evidence="2">
    <location>
        <begin position="243"/>
        <end position="247"/>
    </location>
    <ligand>
        <name>GTP</name>
        <dbReference type="ChEBI" id="CHEBI:37565"/>
    </ligand>
</feature>
<feature type="binding site" evidence="2">
    <location>
        <begin position="297"/>
        <end position="300"/>
    </location>
    <ligand>
        <name>GTP</name>
        <dbReference type="ChEBI" id="CHEBI:37565"/>
    </ligand>
</feature>
<accession>Q732Q9</accession>
<gene>
    <name evidence="2" type="primary">infB</name>
    <name type="ordered locus">BCE_3851</name>
</gene>
<protein>
    <recommendedName>
        <fullName evidence="2">Translation initiation factor IF-2</fullName>
    </recommendedName>
</protein>
<organism>
    <name type="scientific">Bacillus cereus (strain ATCC 10987 / NRS 248)</name>
    <dbReference type="NCBI Taxonomy" id="222523"/>
    <lineage>
        <taxon>Bacteria</taxon>
        <taxon>Bacillati</taxon>
        <taxon>Bacillota</taxon>
        <taxon>Bacilli</taxon>
        <taxon>Bacillales</taxon>
        <taxon>Bacillaceae</taxon>
        <taxon>Bacillus</taxon>
        <taxon>Bacillus cereus group</taxon>
    </lineage>
</organism>
<keyword id="KW-0963">Cytoplasm</keyword>
<keyword id="KW-0342">GTP-binding</keyword>
<keyword id="KW-0396">Initiation factor</keyword>
<keyword id="KW-0547">Nucleotide-binding</keyword>
<keyword id="KW-0648">Protein biosynthesis</keyword>
<proteinExistence type="inferred from homology"/>
<reference key="1">
    <citation type="journal article" date="2004" name="Nucleic Acids Res.">
        <title>The genome sequence of Bacillus cereus ATCC 10987 reveals metabolic adaptations and a large plasmid related to Bacillus anthracis pXO1.</title>
        <authorList>
            <person name="Rasko D.A."/>
            <person name="Ravel J."/>
            <person name="Oekstad O.A."/>
            <person name="Helgason E."/>
            <person name="Cer R.Z."/>
            <person name="Jiang L."/>
            <person name="Shores K.A."/>
            <person name="Fouts D.E."/>
            <person name="Tourasse N.J."/>
            <person name="Angiuoli S.V."/>
            <person name="Kolonay J.F."/>
            <person name="Nelson W.C."/>
            <person name="Kolstoe A.-B."/>
            <person name="Fraser C.M."/>
            <person name="Read T.D."/>
        </authorList>
    </citation>
    <scope>NUCLEOTIDE SEQUENCE [LARGE SCALE GENOMIC DNA]</scope>
    <source>
        <strain>ATCC 10987 / NRS 248</strain>
    </source>
</reference>
<comment type="function">
    <text evidence="2">One of the essential components for the initiation of protein synthesis. Protects formylmethionyl-tRNA from spontaneous hydrolysis and promotes its binding to the 30S ribosomal subunits. Also involved in the hydrolysis of GTP during the formation of the 70S ribosomal complex.</text>
</comment>
<comment type="subcellular location">
    <subcellularLocation>
        <location evidence="2">Cytoplasm</location>
    </subcellularLocation>
</comment>
<comment type="similarity">
    <text evidence="2">Belongs to the TRAFAC class translation factor GTPase superfamily. Classic translation factor GTPase family. IF-2 subfamily.</text>
</comment>
<sequence>MSKIRVHEYAKKHNISSKDLMTKLKEMNIEVSNHMTMLDDEVVNKLDNEYQTEKPSVADEFEVEEKVVRSKKNSNKKKKKGKGNEDKRQENFAGRQQTQTVETPDKITFSGSLTVGDLAKKLSKEPSEIIKKLFMLGIMATINQDLDKDTIELIANDYGIEVEEEVIVSETEFETFIDEQDDEENLKERPAVVTIMGHVDHGKTTLLDSIRNSKVTAGEAGGITQHIGAYQVEVNDKKITFLDTPGHAAFTTMRARGAQVTDITILVVAADDGVMPQTVEAINHAKAAGVPIIVAVNKMDKPAANPDRVMQELTEYELVPEAWGGDTIFVPISAIQGEGIDNLLEMILLVSEVEEYKANPNRYATGTVIEAQLDKGKGTIATLLVQNGTLRVGDPIVVGTTFGRVRAMVSDIGRRVKVAGPSTPVEITGLNEVPQAGDRFMAFADEKKARQIGESRAQEALLAQRGEKSKLSLEDLFQQIQEGDVKEINLIVKADVQGSVEAMAASLRKIDVEGVKVKIIHTGVGAITESDIILASASNAIVIGFNVRPDVNAKRTAELENVDIRLHRIIYKVIEEIEAAMQGMLDPEFEEKVIGQAEVRQTFKVTKVGTIAGCYVTDGKITRDSGVRIIRDGVVIYEGQLDTLKRFKDDVKEVAQNYECGITIEKYNDLKEGDIIEAYIMEEVKR</sequence>
<dbReference type="EMBL" id="AE017194">
    <property type="protein sequence ID" value="AAS42756.1"/>
    <property type="molecule type" value="Genomic_DNA"/>
</dbReference>
<dbReference type="SMR" id="Q732Q9"/>
<dbReference type="KEGG" id="bca:BCE_3851"/>
<dbReference type="HOGENOM" id="CLU_006301_5_1_9"/>
<dbReference type="Proteomes" id="UP000002527">
    <property type="component" value="Chromosome"/>
</dbReference>
<dbReference type="GO" id="GO:0005829">
    <property type="term" value="C:cytosol"/>
    <property type="evidence" value="ECO:0007669"/>
    <property type="project" value="TreeGrafter"/>
</dbReference>
<dbReference type="GO" id="GO:0005525">
    <property type="term" value="F:GTP binding"/>
    <property type="evidence" value="ECO:0007669"/>
    <property type="project" value="UniProtKB-KW"/>
</dbReference>
<dbReference type="GO" id="GO:0003924">
    <property type="term" value="F:GTPase activity"/>
    <property type="evidence" value="ECO:0007669"/>
    <property type="project" value="UniProtKB-UniRule"/>
</dbReference>
<dbReference type="GO" id="GO:0003743">
    <property type="term" value="F:translation initiation factor activity"/>
    <property type="evidence" value="ECO:0007669"/>
    <property type="project" value="UniProtKB-UniRule"/>
</dbReference>
<dbReference type="CDD" id="cd01887">
    <property type="entry name" value="IF2_eIF5B"/>
    <property type="match status" value="1"/>
</dbReference>
<dbReference type="CDD" id="cd03702">
    <property type="entry name" value="IF2_mtIF2_II"/>
    <property type="match status" value="1"/>
</dbReference>
<dbReference type="CDD" id="cd03692">
    <property type="entry name" value="mtIF2_IVc"/>
    <property type="match status" value="1"/>
</dbReference>
<dbReference type="FunFam" id="1.10.10.2480:FF:000001">
    <property type="entry name" value="Translation initiation factor IF-2"/>
    <property type="match status" value="1"/>
</dbReference>
<dbReference type="FunFam" id="2.40.30.10:FF:000007">
    <property type="entry name" value="Translation initiation factor IF-2"/>
    <property type="match status" value="1"/>
</dbReference>
<dbReference type="FunFam" id="2.40.30.10:FF:000008">
    <property type="entry name" value="Translation initiation factor IF-2"/>
    <property type="match status" value="1"/>
</dbReference>
<dbReference type="FunFam" id="3.40.50.10050:FF:000001">
    <property type="entry name" value="Translation initiation factor IF-2"/>
    <property type="match status" value="1"/>
</dbReference>
<dbReference type="FunFam" id="3.40.50.300:FF:000019">
    <property type="entry name" value="Translation initiation factor IF-2"/>
    <property type="match status" value="1"/>
</dbReference>
<dbReference type="Gene3D" id="1.10.10.2480">
    <property type="match status" value="1"/>
</dbReference>
<dbReference type="Gene3D" id="3.40.50.300">
    <property type="entry name" value="P-loop containing nucleotide triphosphate hydrolases"/>
    <property type="match status" value="1"/>
</dbReference>
<dbReference type="Gene3D" id="2.40.30.10">
    <property type="entry name" value="Translation factors"/>
    <property type="match status" value="2"/>
</dbReference>
<dbReference type="Gene3D" id="3.40.50.10050">
    <property type="entry name" value="Translation initiation factor IF- 2, domain 3"/>
    <property type="match status" value="1"/>
</dbReference>
<dbReference type="HAMAP" id="MF_00100_B">
    <property type="entry name" value="IF_2_B"/>
    <property type="match status" value="1"/>
</dbReference>
<dbReference type="InterPro" id="IPR053905">
    <property type="entry name" value="EF-G-like_DII"/>
</dbReference>
<dbReference type="InterPro" id="IPR044145">
    <property type="entry name" value="IF2_II"/>
</dbReference>
<dbReference type="InterPro" id="IPR006847">
    <property type="entry name" value="IF2_N"/>
</dbReference>
<dbReference type="InterPro" id="IPR027417">
    <property type="entry name" value="P-loop_NTPase"/>
</dbReference>
<dbReference type="InterPro" id="IPR005225">
    <property type="entry name" value="Small_GTP-bd"/>
</dbReference>
<dbReference type="InterPro" id="IPR000795">
    <property type="entry name" value="T_Tr_GTP-bd_dom"/>
</dbReference>
<dbReference type="InterPro" id="IPR000178">
    <property type="entry name" value="TF_IF2_bacterial-like"/>
</dbReference>
<dbReference type="InterPro" id="IPR015760">
    <property type="entry name" value="TIF_IF2"/>
</dbReference>
<dbReference type="InterPro" id="IPR023115">
    <property type="entry name" value="TIF_IF2_dom3"/>
</dbReference>
<dbReference type="InterPro" id="IPR036925">
    <property type="entry name" value="TIF_IF2_dom3_sf"/>
</dbReference>
<dbReference type="InterPro" id="IPR009000">
    <property type="entry name" value="Transl_B-barrel_sf"/>
</dbReference>
<dbReference type="NCBIfam" id="TIGR00487">
    <property type="entry name" value="IF-2"/>
    <property type="match status" value="1"/>
</dbReference>
<dbReference type="NCBIfam" id="TIGR00231">
    <property type="entry name" value="small_GTP"/>
    <property type="match status" value="1"/>
</dbReference>
<dbReference type="PANTHER" id="PTHR43381:SF5">
    <property type="entry name" value="TR-TYPE G DOMAIN-CONTAINING PROTEIN"/>
    <property type="match status" value="1"/>
</dbReference>
<dbReference type="PANTHER" id="PTHR43381">
    <property type="entry name" value="TRANSLATION INITIATION FACTOR IF-2-RELATED"/>
    <property type="match status" value="1"/>
</dbReference>
<dbReference type="Pfam" id="PF22042">
    <property type="entry name" value="EF-G_D2"/>
    <property type="match status" value="1"/>
</dbReference>
<dbReference type="Pfam" id="PF00009">
    <property type="entry name" value="GTP_EFTU"/>
    <property type="match status" value="1"/>
</dbReference>
<dbReference type="Pfam" id="PF11987">
    <property type="entry name" value="IF-2"/>
    <property type="match status" value="1"/>
</dbReference>
<dbReference type="Pfam" id="PF04760">
    <property type="entry name" value="IF2_N"/>
    <property type="match status" value="2"/>
</dbReference>
<dbReference type="SUPFAM" id="SSF52156">
    <property type="entry name" value="Initiation factor IF2/eIF5b, domain 3"/>
    <property type="match status" value="1"/>
</dbReference>
<dbReference type="SUPFAM" id="SSF52540">
    <property type="entry name" value="P-loop containing nucleoside triphosphate hydrolases"/>
    <property type="match status" value="1"/>
</dbReference>
<dbReference type="SUPFAM" id="SSF50447">
    <property type="entry name" value="Translation proteins"/>
    <property type="match status" value="2"/>
</dbReference>
<dbReference type="PROSITE" id="PS51722">
    <property type="entry name" value="G_TR_2"/>
    <property type="match status" value="1"/>
</dbReference>
<dbReference type="PROSITE" id="PS01176">
    <property type="entry name" value="IF2"/>
    <property type="match status" value="1"/>
</dbReference>
<name>IF2_BACC1</name>